<accession>Q9HVP8</accession>
<organism>
    <name type="scientific">Pseudomonas aeruginosa (strain ATCC 15692 / DSM 22644 / CIP 104116 / JCM 14847 / LMG 12228 / 1C / PRS 101 / PAO1)</name>
    <dbReference type="NCBI Taxonomy" id="208964"/>
    <lineage>
        <taxon>Bacteria</taxon>
        <taxon>Pseudomonadati</taxon>
        <taxon>Pseudomonadota</taxon>
        <taxon>Gammaproteobacteria</taxon>
        <taxon>Pseudomonadales</taxon>
        <taxon>Pseudomonadaceae</taxon>
        <taxon>Pseudomonas</taxon>
    </lineage>
</organism>
<evidence type="ECO:0000255" key="1">
    <source>
        <dbReference type="HAMAP-Rule" id="MF_00376"/>
    </source>
</evidence>
<evidence type="ECO:0000305" key="2"/>
<proteinExistence type="inferred from homology"/>
<name>COAE_PSEAE</name>
<comment type="function">
    <text evidence="1">Catalyzes the phosphorylation of the 3'-hydroxyl group of dephosphocoenzyme A to form coenzyme A.</text>
</comment>
<comment type="catalytic activity">
    <reaction evidence="1">
        <text>3'-dephospho-CoA + ATP = ADP + CoA + H(+)</text>
        <dbReference type="Rhea" id="RHEA:18245"/>
        <dbReference type="ChEBI" id="CHEBI:15378"/>
        <dbReference type="ChEBI" id="CHEBI:30616"/>
        <dbReference type="ChEBI" id="CHEBI:57287"/>
        <dbReference type="ChEBI" id="CHEBI:57328"/>
        <dbReference type="ChEBI" id="CHEBI:456216"/>
        <dbReference type="EC" id="2.7.1.24"/>
    </reaction>
</comment>
<comment type="pathway">
    <text evidence="1">Cofactor biosynthesis; coenzyme A biosynthesis; CoA from (R)-pantothenate: step 5/5.</text>
</comment>
<comment type="subcellular location">
    <subcellularLocation>
        <location evidence="1">Cytoplasm</location>
    </subcellularLocation>
</comment>
<comment type="similarity">
    <text evidence="1 2">Belongs to the CoaE family.</text>
</comment>
<keyword id="KW-0067">ATP-binding</keyword>
<keyword id="KW-0173">Coenzyme A biosynthesis</keyword>
<keyword id="KW-0963">Cytoplasm</keyword>
<keyword id="KW-0418">Kinase</keyword>
<keyword id="KW-0547">Nucleotide-binding</keyword>
<keyword id="KW-1185">Reference proteome</keyword>
<keyword id="KW-0808">Transferase</keyword>
<feature type="chain" id="PRO_0000172980" description="Dephospho-CoA kinase">
    <location>
        <begin position="1"/>
        <end position="203"/>
    </location>
</feature>
<feature type="domain" description="DPCK" evidence="1">
    <location>
        <begin position="6"/>
        <end position="203"/>
    </location>
</feature>
<feature type="binding site" evidence="1">
    <location>
        <begin position="14"/>
        <end position="19"/>
    </location>
    <ligand>
        <name>ATP</name>
        <dbReference type="ChEBI" id="CHEBI:30616"/>
    </ligand>
</feature>
<protein>
    <recommendedName>
        <fullName evidence="1">Dephospho-CoA kinase</fullName>
        <ecNumber evidence="1">2.7.1.24</ecNumber>
    </recommendedName>
    <alternativeName>
        <fullName evidence="1">Dephosphocoenzyme A kinase</fullName>
    </alternativeName>
</protein>
<gene>
    <name evidence="1" type="primary">coaE</name>
    <name type="ordered locus">PA4529</name>
</gene>
<dbReference type="EC" id="2.7.1.24" evidence="1"/>
<dbReference type="EMBL" id="AE004091">
    <property type="protein sequence ID" value="AAG07917.1"/>
    <property type="molecule type" value="Genomic_DNA"/>
</dbReference>
<dbReference type="PIR" id="E83078">
    <property type="entry name" value="E83078"/>
</dbReference>
<dbReference type="RefSeq" id="NP_253219.1">
    <property type="nucleotide sequence ID" value="NC_002516.2"/>
</dbReference>
<dbReference type="RefSeq" id="WP_003112838.1">
    <property type="nucleotide sequence ID" value="NZ_QZGE01000004.1"/>
</dbReference>
<dbReference type="SMR" id="Q9HVP8"/>
<dbReference type="FunCoup" id="Q9HVP8">
    <property type="interactions" value="565"/>
</dbReference>
<dbReference type="STRING" id="208964.PA4529"/>
<dbReference type="PaxDb" id="208964-PA4529"/>
<dbReference type="GeneID" id="878572"/>
<dbReference type="KEGG" id="pae:PA4529"/>
<dbReference type="PATRIC" id="fig|208964.12.peg.4740"/>
<dbReference type="PseudoCAP" id="PA4529"/>
<dbReference type="HOGENOM" id="CLU_057180_1_2_6"/>
<dbReference type="InParanoid" id="Q9HVP8"/>
<dbReference type="OrthoDB" id="9812943at2"/>
<dbReference type="PhylomeDB" id="Q9HVP8"/>
<dbReference type="BioCyc" id="PAER208964:G1FZ6-4619-MONOMER"/>
<dbReference type="UniPathway" id="UPA00241">
    <property type="reaction ID" value="UER00356"/>
</dbReference>
<dbReference type="Proteomes" id="UP000002438">
    <property type="component" value="Chromosome"/>
</dbReference>
<dbReference type="GO" id="GO:0005737">
    <property type="term" value="C:cytoplasm"/>
    <property type="evidence" value="ECO:0007669"/>
    <property type="project" value="UniProtKB-SubCell"/>
</dbReference>
<dbReference type="GO" id="GO:0005524">
    <property type="term" value="F:ATP binding"/>
    <property type="evidence" value="ECO:0007669"/>
    <property type="project" value="UniProtKB-UniRule"/>
</dbReference>
<dbReference type="GO" id="GO:0004140">
    <property type="term" value="F:dephospho-CoA kinase activity"/>
    <property type="evidence" value="ECO:0000318"/>
    <property type="project" value="GO_Central"/>
</dbReference>
<dbReference type="GO" id="GO:0015937">
    <property type="term" value="P:coenzyme A biosynthetic process"/>
    <property type="evidence" value="ECO:0000318"/>
    <property type="project" value="GO_Central"/>
</dbReference>
<dbReference type="CDD" id="cd02022">
    <property type="entry name" value="DPCK"/>
    <property type="match status" value="1"/>
</dbReference>
<dbReference type="Gene3D" id="3.40.50.300">
    <property type="entry name" value="P-loop containing nucleotide triphosphate hydrolases"/>
    <property type="match status" value="1"/>
</dbReference>
<dbReference type="HAMAP" id="MF_00376">
    <property type="entry name" value="Dephospho_CoA_kinase"/>
    <property type="match status" value="1"/>
</dbReference>
<dbReference type="InterPro" id="IPR001977">
    <property type="entry name" value="Depp_CoAkinase"/>
</dbReference>
<dbReference type="InterPro" id="IPR027417">
    <property type="entry name" value="P-loop_NTPase"/>
</dbReference>
<dbReference type="NCBIfam" id="TIGR00152">
    <property type="entry name" value="dephospho-CoA kinase"/>
    <property type="match status" value="1"/>
</dbReference>
<dbReference type="PANTHER" id="PTHR10695:SF46">
    <property type="entry name" value="BIFUNCTIONAL COENZYME A SYNTHASE-RELATED"/>
    <property type="match status" value="1"/>
</dbReference>
<dbReference type="PANTHER" id="PTHR10695">
    <property type="entry name" value="DEPHOSPHO-COA KINASE-RELATED"/>
    <property type="match status" value="1"/>
</dbReference>
<dbReference type="Pfam" id="PF01121">
    <property type="entry name" value="CoaE"/>
    <property type="match status" value="1"/>
</dbReference>
<dbReference type="SUPFAM" id="SSF52540">
    <property type="entry name" value="P-loop containing nucleoside triphosphate hydrolases"/>
    <property type="match status" value="1"/>
</dbReference>
<dbReference type="PROSITE" id="PS51219">
    <property type="entry name" value="DPCK"/>
    <property type="match status" value="1"/>
</dbReference>
<sequence length="203" mass="22843">MTQPWILGLTGGIGSGKSAAAEHFISLGVHLVDADHAARWVVEPGRPALAKIVERFGDGILLPDGQLDRAALRERIFQAPEERRWLEQLLHPLIGAEIVQYLARAESPYAILVSPLLVESGQRQMTHRVLVVDTPEHLQLQRTMLRDKVSEEQVRSILQAQARRDERLKHADDVLVNDGDLSHLQREVERLHAFYLTLRGGRA</sequence>
<reference key="1">
    <citation type="journal article" date="2000" name="Nature">
        <title>Complete genome sequence of Pseudomonas aeruginosa PAO1, an opportunistic pathogen.</title>
        <authorList>
            <person name="Stover C.K."/>
            <person name="Pham X.-Q.T."/>
            <person name="Erwin A.L."/>
            <person name="Mizoguchi S.D."/>
            <person name="Warrener P."/>
            <person name="Hickey M.J."/>
            <person name="Brinkman F.S.L."/>
            <person name="Hufnagle W.O."/>
            <person name="Kowalik D.J."/>
            <person name="Lagrou M."/>
            <person name="Garber R.L."/>
            <person name="Goltry L."/>
            <person name="Tolentino E."/>
            <person name="Westbrock-Wadman S."/>
            <person name="Yuan Y."/>
            <person name="Brody L.L."/>
            <person name="Coulter S.N."/>
            <person name="Folger K.R."/>
            <person name="Kas A."/>
            <person name="Larbig K."/>
            <person name="Lim R.M."/>
            <person name="Smith K.A."/>
            <person name="Spencer D.H."/>
            <person name="Wong G.K.-S."/>
            <person name="Wu Z."/>
            <person name="Paulsen I.T."/>
            <person name="Reizer J."/>
            <person name="Saier M.H. Jr."/>
            <person name="Hancock R.E.W."/>
            <person name="Lory S."/>
            <person name="Olson M.V."/>
        </authorList>
    </citation>
    <scope>NUCLEOTIDE SEQUENCE [LARGE SCALE GENOMIC DNA]</scope>
    <source>
        <strain>ATCC 15692 / DSM 22644 / CIP 104116 / JCM 14847 / LMG 12228 / 1C / PRS 101 / PAO1</strain>
    </source>
</reference>